<gene>
    <name evidence="1" type="primary">pgl</name>
    <name type="ordered locus">ECSE_0820</name>
</gene>
<accession>B6I7S1</accession>
<organism>
    <name type="scientific">Escherichia coli (strain SE11)</name>
    <dbReference type="NCBI Taxonomy" id="409438"/>
    <lineage>
        <taxon>Bacteria</taxon>
        <taxon>Pseudomonadati</taxon>
        <taxon>Pseudomonadota</taxon>
        <taxon>Gammaproteobacteria</taxon>
        <taxon>Enterobacterales</taxon>
        <taxon>Enterobacteriaceae</taxon>
        <taxon>Escherichia</taxon>
    </lineage>
</organism>
<evidence type="ECO:0000255" key="1">
    <source>
        <dbReference type="HAMAP-Rule" id="MF_01605"/>
    </source>
</evidence>
<feature type="chain" id="PRO_1000148156" description="6-phosphogluconolactonase">
    <location>
        <begin position="1"/>
        <end position="331"/>
    </location>
</feature>
<feature type="modified residue" description="N6-acetyllysine" evidence="1">
    <location>
        <position position="287"/>
    </location>
</feature>
<keyword id="KW-0007">Acetylation</keyword>
<keyword id="KW-0119">Carbohydrate metabolism</keyword>
<keyword id="KW-0313">Glucose metabolism</keyword>
<keyword id="KW-0378">Hydrolase</keyword>
<comment type="function">
    <text evidence="1">Catalyzes the hydrolysis of 6-phosphogluconolactone to 6-phosphogluconate.</text>
</comment>
<comment type="catalytic activity">
    <reaction evidence="1">
        <text>6-phospho-D-glucono-1,5-lactone + H2O = 6-phospho-D-gluconate + H(+)</text>
        <dbReference type="Rhea" id="RHEA:12556"/>
        <dbReference type="ChEBI" id="CHEBI:15377"/>
        <dbReference type="ChEBI" id="CHEBI:15378"/>
        <dbReference type="ChEBI" id="CHEBI:57955"/>
        <dbReference type="ChEBI" id="CHEBI:58759"/>
        <dbReference type="EC" id="3.1.1.31"/>
    </reaction>
</comment>
<comment type="pathway">
    <text evidence="1">Carbohydrate degradation; pentose phosphate pathway; D-ribulose 5-phosphate from D-glucose 6-phosphate (oxidative stage): step 2/3.</text>
</comment>
<comment type="similarity">
    <text evidence="1">Belongs to the cycloisomerase 2 family.</text>
</comment>
<sequence length="331" mass="36308">MKQTVYIASPESQQIHVWNLNHEGALTLTQVVDVPGQVQPMVVSPDKRYLYVGVRPEFRVLAYRIAPDDGALTFAAESALPGSPTHISTDHQGQFVFVGSYNAGNVSVTRLEDGLPVGVVDVVEGLDGCHSANISPDNRTLWVPALKQDRICLFTVSDDGHLVAQDPAEVTTVEGAGPRHMVFHPNEQYAYCVNELNSSVDVWELKDPHGNIECVQTLDMMPENFSDTRWAADIHITPDGRHLYACDRTASLITVFSVSEDGSVLSKEGFQPTETQPRGFNVDHSGKYLIAAGQKSHHISVYEIVGEQGLLHEKGRYAVGQGPMWVVVNAH</sequence>
<dbReference type="EC" id="3.1.1.31" evidence="1"/>
<dbReference type="EMBL" id="AP009240">
    <property type="protein sequence ID" value="BAG76344.1"/>
    <property type="molecule type" value="Genomic_DNA"/>
</dbReference>
<dbReference type="RefSeq" id="WP_000815435.1">
    <property type="nucleotide sequence ID" value="NC_011415.1"/>
</dbReference>
<dbReference type="SMR" id="B6I7S1"/>
<dbReference type="GeneID" id="86945650"/>
<dbReference type="KEGG" id="ecy:ECSE_0820"/>
<dbReference type="HOGENOM" id="CLU_038716_2_0_6"/>
<dbReference type="UniPathway" id="UPA00115">
    <property type="reaction ID" value="UER00409"/>
</dbReference>
<dbReference type="Proteomes" id="UP000008199">
    <property type="component" value="Chromosome"/>
</dbReference>
<dbReference type="GO" id="GO:0005829">
    <property type="term" value="C:cytosol"/>
    <property type="evidence" value="ECO:0007669"/>
    <property type="project" value="TreeGrafter"/>
</dbReference>
<dbReference type="GO" id="GO:0017057">
    <property type="term" value="F:6-phosphogluconolactonase activity"/>
    <property type="evidence" value="ECO:0007669"/>
    <property type="project" value="UniProtKB-UniRule"/>
</dbReference>
<dbReference type="GO" id="GO:0006006">
    <property type="term" value="P:glucose metabolic process"/>
    <property type="evidence" value="ECO:0007669"/>
    <property type="project" value="UniProtKB-KW"/>
</dbReference>
<dbReference type="GO" id="GO:0009051">
    <property type="term" value="P:pentose-phosphate shunt, oxidative branch"/>
    <property type="evidence" value="ECO:0007669"/>
    <property type="project" value="UniProtKB-UniRule"/>
</dbReference>
<dbReference type="FunFam" id="2.130.10.10:FF:000051">
    <property type="entry name" value="6-phosphogluconolactonase"/>
    <property type="match status" value="1"/>
</dbReference>
<dbReference type="Gene3D" id="2.130.10.10">
    <property type="entry name" value="YVTN repeat-like/Quinoprotein amine dehydrogenase"/>
    <property type="match status" value="1"/>
</dbReference>
<dbReference type="HAMAP" id="MF_01605">
    <property type="entry name" value="6P_gluconolactonase"/>
    <property type="match status" value="1"/>
</dbReference>
<dbReference type="InterPro" id="IPR022528">
    <property type="entry name" value="6-phosphogluconolactonase_YbhE"/>
</dbReference>
<dbReference type="InterPro" id="IPR050282">
    <property type="entry name" value="Cycloisomerase_2"/>
</dbReference>
<dbReference type="InterPro" id="IPR019405">
    <property type="entry name" value="Lactonase_7-beta_prop"/>
</dbReference>
<dbReference type="InterPro" id="IPR011045">
    <property type="entry name" value="N2O_reductase_N"/>
</dbReference>
<dbReference type="InterPro" id="IPR015943">
    <property type="entry name" value="WD40/YVTN_repeat-like_dom_sf"/>
</dbReference>
<dbReference type="NCBIfam" id="NF008258">
    <property type="entry name" value="PRK11028.1"/>
    <property type="match status" value="1"/>
</dbReference>
<dbReference type="PANTHER" id="PTHR30344:SF1">
    <property type="entry name" value="6-PHOSPHOGLUCONOLACTONASE"/>
    <property type="match status" value="1"/>
</dbReference>
<dbReference type="PANTHER" id="PTHR30344">
    <property type="entry name" value="6-PHOSPHOGLUCONOLACTONASE-RELATED"/>
    <property type="match status" value="1"/>
</dbReference>
<dbReference type="Pfam" id="PF10282">
    <property type="entry name" value="Lactonase"/>
    <property type="match status" value="1"/>
</dbReference>
<dbReference type="SUPFAM" id="SSF50974">
    <property type="entry name" value="Nitrous oxide reductase, N-terminal domain"/>
    <property type="match status" value="1"/>
</dbReference>
<protein>
    <recommendedName>
        <fullName evidence="1">6-phosphogluconolactonase</fullName>
        <shortName evidence="1">6-P-gluconolactonase</shortName>
        <ecNumber evidence="1">3.1.1.31</ecNumber>
    </recommendedName>
</protein>
<reference key="1">
    <citation type="journal article" date="2008" name="DNA Res.">
        <title>Complete genome sequence and comparative analysis of the wild-type commensal Escherichia coli strain SE11 isolated from a healthy adult.</title>
        <authorList>
            <person name="Oshima K."/>
            <person name="Toh H."/>
            <person name="Ogura Y."/>
            <person name="Sasamoto H."/>
            <person name="Morita H."/>
            <person name="Park S.-H."/>
            <person name="Ooka T."/>
            <person name="Iyoda S."/>
            <person name="Taylor T.D."/>
            <person name="Hayashi T."/>
            <person name="Itoh K."/>
            <person name="Hattori M."/>
        </authorList>
    </citation>
    <scope>NUCLEOTIDE SEQUENCE [LARGE SCALE GENOMIC DNA]</scope>
    <source>
        <strain>SE11</strain>
    </source>
</reference>
<name>6PGL_ECOSE</name>
<proteinExistence type="inferred from homology"/>